<comment type="function">
    <text evidence="1">Cleaves beta-linked terminal galactosyl residues from gangliosides, glycoproteins, and glycosaminoglycans.</text>
</comment>
<comment type="catalytic activity">
    <reaction>
        <text>Hydrolysis of terminal non-reducing beta-D-galactose residues in beta-D-galactosides.</text>
        <dbReference type="EC" id="3.2.1.23"/>
    </reaction>
</comment>
<comment type="subcellular location">
    <subcellularLocation>
        <location evidence="1">Secreted</location>
    </subcellularLocation>
</comment>
<comment type="similarity">
    <text evidence="3">Belongs to the glycosyl hydrolase 35 family.</text>
</comment>
<comment type="sequence caution" evidence="3">
    <conflict type="erroneous gene model prediction">
        <sequence resource="EMBL-CDS" id="CBF88847"/>
    </conflict>
</comment>
<comment type="sequence caution" evidence="3">
    <conflict type="erroneous gene model prediction">
        <sequence resource="EMBL-CDS" id="EAA65398"/>
    </conflict>
</comment>
<gene>
    <name type="primary">lacA</name>
    <name type="ORF">AN0756</name>
</gene>
<reference key="1">
    <citation type="journal article" date="2005" name="Nature">
        <title>Sequencing of Aspergillus nidulans and comparative analysis with A. fumigatus and A. oryzae.</title>
        <authorList>
            <person name="Galagan J.E."/>
            <person name="Calvo S.E."/>
            <person name="Cuomo C."/>
            <person name="Ma L.-J."/>
            <person name="Wortman J.R."/>
            <person name="Batzoglou S."/>
            <person name="Lee S.-I."/>
            <person name="Bastuerkmen M."/>
            <person name="Spevak C.C."/>
            <person name="Clutterbuck J."/>
            <person name="Kapitonov V."/>
            <person name="Jurka J."/>
            <person name="Scazzocchio C."/>
            <person name="Farman M.L."/>
            <person name="Butler J."/>
            <person name="Purcell S."/>
            <person name="Harris S."/>
            <person name="Braus G.H."/>
            <person name="Draht O."/>
            <person name="Busch S."/>
            <person name="D'Enfert C."/>
            <person name="Bouchier C."/>
            <person name="Goldman G.H."/>
            <person name="Bell-Pedersen D."/>
            <person name="Griffiths-Jones S."/>
            <person name="Doonan J.H."/>
            <person name="Yu J."/>
            <person name="Vienken K."/>
            <person name="Pain A."/>
            <person name="Freitag M."/>
            <person name="Selker E.U."/>
            <person name="Archer D.B."/>
            <person name="Penalva M.A."/>
            <person name="Oakley B.R."/>
            <person name="Momany M."/>
            <person name="Tanaka T."/>
            <person name="Kumagai T."/>
            <person name="Asai K."/>
            <person name="Machida M."/>
            <person name="Nierman W.C."/>
            <person name="Denning D.W."/>
            <person name="Caddick M.X."/>
            <person name="Hynes M."/>
            <person name="Paoletti M."/>
            <person name="Fischer R."/>
            <person name="Miller B.L."/>
            <person name="Dyer P.S."/>
            <person name="Sachs M.S."/>
            <person name="Osmani S.A."/>
            <person name="Birren B.W."/>
        </authorList>
    </citation>
    <scope>NUCLEOTIDE SEQUENCE [LARGE SCALE GENOMIC DNA]</scope>
    <source>
        <strain>FGSC A4 / ATCC 38163 / CBS 112.46 / NRRL 194 / M139</strain>
    </source>
</reference>
<reference key="2">
    <citation type="journal article" date="2009" name="Fungal Genet. Biol.">
        <title>The 2008 update of the Aspergillus nidulans genome annotation: a community effort.</title>
        <authorList>
            <person name="Wortman J.R."/>
            <person name="Gilsenan J.M."/>
            <person name="Joardar V."/>
            <person name="Deegan J."/>
            <person name="Clutterbuck J."/>
            <person name="Andersen M.R."/>
            <person name="Archer D."/>
            <person name="Bencina M."/>
            <person name="Braus G."/>
            <person name="Coutinho P."/>
            <person name="von Dohren H."/>
            <person name="Doonan J."/>
            <person name="Driessen A.J."/>
            <person name="Durek P."/>
            <person name="Espeso E."/>
            <person name="Fekete E."/>
            <person name="Flipphi M."/>
            <person name="Estrada C.G."/>
            <person name="Geysens S."/>
            <person name="Goldman G."/>
            <person name="de Groot P.W."/>
            <person name="Hansen K."/>
            <person name="Harris S.D."/>
            <person name="Heinekamp T."/>
            <person name="Helmstaedt K."/>
            <person name="Henrissat B."/>
            <person name="Hofmann G."/>
            <person name="Homan T."/>
            <person name="Horio T."/>
            <person name="Horiuchi H."/>
            <person name="James S."/>
            <person name="Jones M."/>
            <person name="Karaffa L."/>
            <person name="Karanyi Z."/>
            <person name="Kato M."/>
            <person name="Keller N."/>
            <person name="Kelly D.E."/>
            <person name="Kiel J.A."/>
            <person name="Kim J.M."/>
            <person name="van der Klei I.J."/>
            <person name="Klis F.M."/>
            <person name="Kovalchuk A."/>
            <person name="Krasevec N."/>
            <person name="Kubicek C.P."/>
            <person name="Liu B."/>
            <person name="Maccabe A."/>
            <person name="Meyer V."/>
            <person name="Mirabito P."/>
            <person name="Miskei M."/>
            <person name="Mos M."/>
            <person name="Mullins J."/>
            <person name="Nelson D.R."/>
            <person name="Nielsen J."/>
            <person name="Oakley B.R."/>
            <person name="Osmani S.A."/>
            <person name="Pakula T."/>
            <person name="Paszewski A."/>
            <person name="Paulsen I."/>
            <person name="Pilsyk S."/>
            <person name="Pocsi I."/>
            <person name="Punt P.J."/>
            <person name="Ram A.F."/>
            <person name="Ren Q."/>
            <person name="Robellet X."/>
            <person name="Robson G."/>
            <person name="Seiboth B."/>
            <person name="van Solingen P."/>
            <person name="Specht T."/>
            <person name="Sun J."/>
            <person name="Taheri-Talesh N."/>
            <person name="Takeshita N."/>
            <person name="Ussery D."/>
            <person name="vanKuyk P.A."/>
            <person name="Visser H."/>
            <person name="van de Vondervoort P.J."/>
            <person name="de Vries R.P."/>
            <person name="Walton J."/>
            <person name="Xiang X."/>
            <person name="Xiong Y."/>
            <person name="Zeng A.P."/>
            <person name="Brandt B.W."/>
            <person name="Cornell M.J."/>
            <person name="van den Hondel C.A."/>
            <person name="Visser J."/>
            <person name="Oliver S.G."/>
            <person name="Turner G."/>
        </authorList>
    </citation>
    <scope>GENOME REANNOTATION</scope>
    <source>
        <strain>FGSC A4 / ATCC 38163 / CBS 112.46 / NRRL 194 / M139</strain>
    </source>
</reference>
<dbReference type="EC" id="3.2.1.23"/>
<dbReference type="EMBL" id="AACD01000012">
    <property type="protein sequence ID" value="EAA65398.1"/>
    <property type="status" value="ALT_SEQ"/>
    <property type="molecule type" value="Genomic_DNA"/>
</dbReference>
<dbReference type="EMBL" id="BN001308">
    <property type="protein sequence ID" value="CBF88847.1"/>
    <property type="status" value="ALT_SEQ"/>
    <property type="molecule type" value="Genomic_DNA"/>
</dbReference>
<dbReference type="RefSeq" id="XP_658360.1">
    <property type="nucleotide sequence ID" value="XM_653268.1"/>
</dbReference>
<dbReference type="SMR" id="Q5BFC4"/>
<dbReference type="STRING" id="227321.Q5BFC4"/>
<dbReference type="CAZy" id="GH35">
    <property type="family name" value="Glycoside Hydrolase Family 35"/>
</dbReference>
<dbReference type="GlyCosmos" id="Q5BFC4">
    <property type="glycosylation" value="7 sites, No reported glycans"/>
</dbReference>
<dbReference type="KEGG" id="ani:ANIA_00756"/>
<dbReference type="VEuPathDB" id="FungiDB:AN0756"/>
<dbReference type="eggNOG" id="KOG0496">
    <property type="taxonomic scope" value="Eukaryota"/>
</dbReference>
<dbReference type="HOGENOM" id="CLU_005732_2_0_1"/>
<dbReference type="InParanoid" id="Q5BFC4"/>
<dbReference type="OrthoDB" id="1657402at2759"/>
<dbReference type="Proteomes" id="UP000000560">
    <property type="component" value="Chromosome VIII"/>
</dbReference>
<dbReference type="GO" id="GO:0005576">
    <property type="term" value="C:extracellular region"/>
    <property type="evidence" value="ECO:0007669"/>
    <property type="project" value="UniProtKB-SubCell"/>
</dbReference>
<dbReference type="GO" id="GO:0005773">
    <property type="term" value="C:vacuole"/>
    <property type="evidence" value="ECO:0000318"/>
    <property type="project" value="GO_Central"/>
</dbReference>
<dbReference type="GO" id="GO:0004565">
    <property type="term" value="F:beta-galactosidase activity"/>
    <property type="evidence" value="ECO:0000314"/>
    <property type="project" value="AspGD"/>
</dbReference>
<dbReference type="GO" id="GO:0019388">
    <property type="term" value="P:galactose catabolic process"/>
    <property type="evidence" value="ECO:0000318"/>
    <property type="project" value="GO_Central"/>
</dbReference>
<dbReference type="GO" id="GO:0000272">
    <property type="term" value="P:polysaccharide catabolic process"/>
    <property type="evidence" value="ECO:0007669"/>
    <property type="project" value="UniProtKB-KW"/>
</dbReference>
<dbReference type="FunFam" id="2.102.20.10:FF:000001">
    <property type="entry name" value="Beta-galactosidase A"/>
    <property type="match status" value="1"/>
</dbReference>
<dbReference type="FunFam" id="2.60.120.260:FF:000065">
    <property type="entry name" value="Beta-galactosidase A"/>
    <property type="match status" value="1"/>
</dbReference>
<dbReference type="FunFam" id="2.60.120.260:FF:000088">
    <property type="entry name" value="Beta-galactosidase A"/>
    <property type="match status" value="1"/>
</dbReference>
<dbReference type="FunFam" id="2.60.390.10:FF:000001">
    <property type="entry name" value="Beta-galactosidase A"/>
    <property type="match status" value="1"/>
</dbReference>
<dbReference type="FunFam" id="3.20.20.80:FF:000040">
    <property type="entry name" value="Beta-galactosidase A"/>
    <property type="match status" value="1"/>
</dbReference>
<dbReference type="Gene3D" id="2.102.20.10">
    <property type="entry name" value="Beta-galactosidase, domain 2"/>
    <property type="match status" value="1"/>
</dbReference>
<dbReference type="Gene3D" id="2.60.390.10">
    <property type="entry name" value="Beta-galactosidase, domain 3"/>
    <property type="match status" value="1"/>
</dbReference>
<dbReference type="Gene3D" id="2.60.120.260">
    <property type="entry name" value="Galactose-binding domain-like"/>
    <property type="match status" value="2"/>
</dbReference>
<dbReference type="Gene3D" id="3.20.20.80">
    <property type="entry name" value="Glycosidases"/>
    <property type="match status" value="1"/>
</dbReference>
<dbReference type="InterPro" id="IPR018954">
    <property type="entry name" value="Betagal_dom2"/>
</dbReference>
<dbReference type="InterPro" id="IPR037110">
    <property type="entry name" value="Betagal_dom2_sf"/>
</dbReference>
<dbReference type="InterPro" id="IPR025972">
    <property type="entry name" value="BetaGal_dom3"/>
</dbReference>
<dbReference type="InterPro" id="IPR036833">
    <property type="entry name" value="BetaGal_dom3_sf"/>
</dbReference>
<dbReference type="InterPro" id="IPR025300">
    <property type="entry name" value="BetaGal_jelly_roll_dom"/>
</dbReference>
<dbReference type="InterPro" id="IPR008979">
    <property type="entry name" value="Galactose-bd-like_sf"/>
</dbReference>
<dbReference type="InterPro" id="IPR031330">
    <property type="entry name" value="Gly_Hdrlase_35_cat"/>
</dbReference>
<dbReference type="InterPro" id="IPR001944">
    <property type="entry name" value="Glycoside_Hdrlase_35"/>
</dbReference>
<dbReference type="InterPro" id="IPR017853">
    <property type="entry name" value="Glycoside_hydrolase_SF"/>
</dbReference>
<dbReference type="PANTHER" id="PTHR23421">
    <property type="entry name" value="BETA-GALACTOSIDASE RELATED"/>
    <property type="match status" value="1"/>
</dbReference>
<dbReference type="Pfam" id="PF13364">
    <property type="entry name" value="BetaGal_ABD2"/>
    <property type="match status" value="2"/>
</dbReference>
<dbReference type="Pfam" id="PF10435">
    <property type="entry name" value="BetaGal_dom2"/>
    <property type="match status" value="1"/>
</dbReference>
<dbReference type="Pfam" id="PF13363">
    <property type="entry name" value="BetaGal_dom3"/>
    <property type="match status" value="1"/>
</dbReference>
<dbReference type="Pfam" id="PF01301">
    <property type="entry name" value="Glyco_hydro_35"/>
    <property type="match status" value="1"/>
</dbReference>
<dbReference type="PRINTS" id="PR00742">
    <property type="entry name" value="GLHYDRLASE35"/>
</dbReference>
<dbReference type="SMART" id="SM01029">
    <property type="entry name" value="BetaGal_dom2"/>
    <property type="match status" value="1"/>
</dbReference>
<dbReference type="SUPFAM" id="SSF51445">
    <property type="entry name" value="(Trans)glycosidases"/>
    <property type="match status" value="1"/>
</dbReference>
<dbReference type="SUPFAM" id="SSF117100">
    <property type="entry name" value="Beta-galactosidase LacA, domain 3"/>
    <property type="match status" value="1"/>
</dbReference>
<dbReference type="SUPFAM" id="SSF49785">
    <property type="entry name" value="Galactose-binding domain-like"/>
    <property type="match status" value="2"/>
</dbReference>
<dbReference type="SUPFAM" id="SSF51011">
    <property type="entry name" value="Glycosyl hydrolase domain"/>
    <property type="match status" value="1"/>
</dbReference>
<keyword id="KW-0119">Carbohydrate metabolism</keyword>
<keyword id="KW-1015">Disulfide bond</keyword>
<keyword id="KW-0325">Glycoprotein</keyword>
<keyword id="KW-0326">Glycosidase</keyword>
<keyword id="KW-0378">Hydrolase</keyword>
<keyword id="KW-0624">Polysaccharide degradation</keyword>
<keyword id="KW-1185">Reference proteome</keyword>
<keyword id="KW-0964">Secreted</keyword>
<keyword id="KW-0732">Signal</keyword>
<organism>
    <name type="scientific">Emericella nidulans (strain FGSC A4 / ATCC 38163 / CBS 112.46 / NRRL 194 / M139)</name>
    <name type="common">Aspergillus nidulans</name>
    <dbReference type="NCBI Taxonomy" id="227321"/>
    <lineage>
        <taxon>Eukaryota</taxon>
        <taxon>Fungi</taxon>
        <taxon>Dikarya</taxon>
        <taxon>Ascomycota</taxon>
        <taxon>Pezizomycotina</taxon>
        <taxon>Eurotiomycetes</taxon>
        <taxon>Eurotiomycetidae</taxon>
        <taxon>Eurotiales</taxon>
        <taxon>Aspergillaceae</taxon>
        <taxon>Aspergillus</taxon>
        <taxon>Aspergillus subgen. Nidulantes</taxon>
    </lineage>
</organism>
<feature type="signal peptide" evidence="2">
    <location>
        <begin position="1"/>
        <end position="18"/>
    </location>
</feature>
<feature type="chain" id="PRO_0000395220" description="Probable beta-galactosidase A">
    <location>
        <begin position="19"/>
        <end position="1007"/>
    </location>
</feature>
<feature type="active site" description="Proton donor" evidence="2">
    <location>
        <position position="200"/>
    </location>
</feature>
<feature type="active site" description="Nucleophile" evidence="2">
    <location>
        <position position="298"/>
    </location>
</feature>
<feature type="binding site" evidence="1">
    <location>
        <position position="96"/>
    </location>
    <ligand>
        <name>substrate</name>
    </ligand>
</feature>
<feature type="binding site" evidence="1">
    <location>
        <position position="140"/>
    </location>
    <ligand>
        <name>substrate</name>
    </ligand>
</feature>
<feature type="binding site" evidence="1">
    <location>
        <position position="141"/>
    </location>
    <ligand>
        <name>substrate</name>
    </ligand>
</feature>
<feature type="binding site" evidence="1">
    <location>
        <position position="142"/>
    </location>
    <ligand>
        <name>substrate</name>
    </ligand>
</feature>
<feature type="binding site" evidence="1">
    <location>
        <position position="199"/>
    </location>
    <ligand>
        <name>substrate</name>
    </ligand>
</feature>
<feature type="binding site" evidence="1">
    <location>
        <position position="260"/>
    </location>
    <ligand>
        <name>substrate</name>
    </ligand>
</feature>
<feature type="binding site" evidence="1">
    <location>
        <position position="364"/>
    </location>
    <ligand>
        <name>substrate</name>
    </ligand>
</feature>
<feature type="glycosylation site" description="N-linked (GlcNAc...) asparagine" evidence="2">
    <location>
        <position position="156"/>
    </location>
</feature>
<feature type="glycosylation site" description="N-linked (GlcNAc...) asparagine" evidence="2">
    <location>
        <position position="405"/>
    </location>
</feature>
<feature type="glycosylation site" description="N-linked (GlcNAc...) asparagine" evidence="2">
    <location>
        <position position="422"/>
    </location>
</feature>
<feature type="glycosylation site" description="N-linked (GlcNAc...) asparagine" evidence="2">
    <location>
        <position position="621"/>
    </location>
</feature>
<feature type="glycosylation site" description="N-linked (GlcNAc...) asparagine" evidence="2">
    <location>
        <position position="740"/>
    </location>
</feature>
<feature type="glycosylation site" description="N-linked (GlcNAc...) asparagine" evidence="2">
    <location>
        <position position="775"/>
    </location>
</feature>
<feature type="glycosylation site" description="N-linked (GlcNAc...) asparagine" evidence="2">
    <location>
        <position position="914"/>
    </location>
</feature>
<feature type="disulfide bond" evidence="1">
    <location>
        <begin position="205"/>
        <end position="206"/>
    </location>
</feature>
<feature type="disulfide bond" evidence="1">
    <location>
        <begin position="266"/>
        <end position="315"/>
    </location>
</feature>
<name>BGALA_EMENI</name>
<protein>
    <recommendedName>
        <fullName>Probable beta-galactosidase A</fullName>
        <ecNumber>3.2.1.23</ecNumber>
    </recommendedName>
    <alternativeName>
        <fullName>Lactase A</fullName>
    </alternativeName>
</protein>
<evidence type="ECO:0000250" key="1"/>
<evidence type="ECO:0000255" key="2"/>
<evidence type="ECO:0000305" key="3"/>
<proteinExistence type="inferred from homology"/>
<accession>Q5BFC4</accession>
<accession>C8VQX7</accession>
<sequence length="1007" mass="111099">MRLLPVWTAALLAAQAAGVALTHKLNGFTITEHPDAEKRELLQKYVTWDDKSLFINGERIMIFGAEIHPWRLPVPSLWRDILQKVKALGFNCVSFYVDWALLEGKPGEYRAEGSFAWEPFFDAASDLGIYLIARPGPYINAEASGGGFPGWLQRLNGTIRSSDQSYLDATENYVSHIGGLIAKYQITNGGPVILYQPDNEYSGGCCGQEFPNPDYFQYVIDQARRAGIVVPTISNDAWPGGHNAPGTGKGEVDIYGHDNYPLGFDCANPDVWPEGNLPTDYRDLHLEISPSTPYALVEYQVGAFDPWGGPGFEQCAALTGYEFERVFHKNTFSFGVGILSLYMTFGGTNWGNLGHPGGYTSYDYGSPIKETREITREKYSELKLLGNFIKSSPGYLLATPGKLTNTTYTNTADLTVTPLLGNGTGSFFVLRHSDYSSQASTPYKLRLPTSAGQLTIPQLGGSLVLNGRDSKVHLVDYDVAGTKILYSTAEVFTWKKFHDGKVLVLYGGPGEHHELAVSSKAKVKVVEGLGSGISSKQIRGAVVVAWDVEPARRIVQIGDLKIFLLDRNSAYNYWVPQLGTETSIPYATEKAVAASVIVKAGYLVRTAYVKGRDLHLTADFNATTPVEVIGAPKTAENLFINGKKAHHTVDKNGIWSTEVGYSPPKIVLPVLEDLKWKSIDTLPEIQPSYDDSPWPDANLPTKNTIYPLRTPTSLYASDYGFHTGYLLFRGHFTANGRESNFSIQTQGGQAFGSSVWLSGTYLGSWTGDNDYQDYNATYTLPSLKAGKEYVFTVVVDNMGLNENWIVGQDEMKKPRGILNYELSGHEASDITWKLTGNFGGEDYVDKVRGPLNEGGLYAERHGYHQPYPPTKSKDWKSSTPLTGLSKPGISFYTASFDLDIKSGWDVPIYFEFGNSTTPAPAYRVQLYVNGWQYGKYVNNIGPQTRFPVPEGILNYKGTNWVAVTLWALEGSGAKLDSFKLVHGIPVRTALDVEGVELPRYQSRKGVY</sequence>